<accession>Q8MMH4</accession>
<evidence type="ECO:0000255" key="1"/>
<evidence type="ECO:0000269" key="2">
    <source>
    </source>
</evidence>
<evidence type="ECO:0000305" key="3"/>
<evidence type="ECO:0000312" key="4">
    <source>
        <dbReference type="EMBL" id="CAD30854.1"/>
    </source>
</evidence>
<proteinExistence type="evidence at protein level"/>
<name>SVP2_PIMHY</name>
<sequence length="78" mass="8852">MKFIVLLGALLALLVAVSADRIAREAPEMESVDEAVLTRQAREAEDPAVVEDAIRKFVRWLVQKYGINIHDLIDHFKH</sequence>
<protein>
    <recommendedName>
        <fullName>Small venom protein 2</fullName>
        <shortName>svp2</shortName>
    </recommendedName>
</protein>
<keyword id="KW-0903">Direct protein sequencing</keyword>
<keyword id="KW-0964">Secreted</keyword>
<keyword id="KW-0732">Signal</keyword>
<organism>
    <name type="scientific">Pimpla hypochondriaca</name>
    <name type="common">Parasitoid wasp</name>
    <dbReference type="NCBI Taxonomy" id="135724"/>
    <lineage>
        <taxon>Eukaryota</taxon>
        <taxon>Metazoa</taxon>
        <taxon>Ecdysozoa</taxon>
        <taxon>Arthropoda</taxon>
        <taxon>Hexapoda</taxon>
        <taxon>Insecta</taxon>
        <taxon>Pterygota</taxon>
        <taxon>Neoptera</taxon>
        <taxon>Endopterygota</taxon>
        <taxon>Hymenoptera</taxon>
        <taxon>Apocrita</taxon>
        <taxon>Ichneumonoidea</taxon>
        <taxon>Ichneumonidae</taxon>
        <taxon>Pimplinae</taxon>
        <taxon>Pimplini</taxon>
        <taxon>Pimpla</taxon>
    </lineage>
</organism>
<reference evidence="3 4" key="1">
    <citation type="journal article" date="2004" name="Insect Biochem. Mol. Biol.">
        <title>Towards a comprehensive view of the primary structure of venom proteins from the parasitoid wasp Pimpla hypochondriaca.</title>
        <authorList>
            <person name="Parkinson N.M."/>
            <person name="Conyers C."/>
            <person name="Keen J."/>
            <person name="MacNicoll A."/>
            <person name="Smith I."/>
            <person name="Audsley N."/>
            <person name="Weaver R."/>
        </authorList>
    </citation>
    <scope>NUCLEOTIDE SEQUENCE [MRNA]</scope>
    <scope>PROTEIN SEQUENCE OF 43-48</scope>
    <source>
        <tissue evidence="2">Venom</tissue>
        <tissue evidence="2">Venom gland</tissue>
    </source>
</reference>
<dbReference type="EMBL" id="AJ459810">
    <property type="protein sequence ID" value="CAD30854.1"/>
    <property type="molecule type" value="mRNA"/>
</dbReference>
<dbReference type="GO" id="GO:0005576">
    <property type="term" value="C:extracellular region"/>
    <property type="evidence" value="ECO:0007669"/>
    <property type="project" value="UniProtKB-SubCell"/>
</dbReference>
<comment type="subcellular location">
    <subcellularLocation>
        <location evidence="2">Secreted</location>
    </subcellularLocation>
</comment>
<comment type="tissue specificity">
    <text evidence="2">Expressed by the venom gland.</text>
</comment>
<feature type="signal peptide" evidence="1 4">
    <location>
        <begin position="1"/>
        <end position="19"/>
    </location>
</feature>
<feature type="propeptide" id="PRO_0000022448" evidence="1 2">
    <location>
        <begin position="20"/>
        <end position="42"/>
    </location>
</feature>
<feature type="chain" id="PRO_0000022449" description="Small venom protein 2" evidence="2">
    <location>
        <begin position="43"/>
        <end position="78"/>
    </location>
</feature>